<name>GATB_FUSV7</name>
<protein>
    <recommendedName>
        <fullName evidence="1">Glutamyl-tRNA(Gln) amidotransferase subunit B, mitochondrial</fullName>
        <shortName evidence="1">Glu-AdT subunit B</shortName>
        <ecNumber evidence="1">6.3.5.-</ecNumber>
    </recommendedName>
</protein>
<keyword id="KW-0067">ATP-binding</keyword>
<keyword id="KW-0436">Ligase</keyword>
<keyword id="KW-0496">Mitochondrion</keyword>
<keyword id="KW-0547">Nucleotide-binding</keyword>
<keyword id="KW-0648">Protein biosynthesis</keyword>
<keyword id="KW-1185">Reference proteome</keyword>
<keyword id="KW-0809">Transit peptide</keyword>
<gene>
    <name type="ORF">NECHADRAFT_39102</name>
</gene>
<sequence length="617" mass="68889">MPRIPTSVLGKYLLSGQISRQGCVGARQITRHSALPSAAVSVANSARLLHVSSETVPPPPAQPVPLRKQLKDEAKKAKKQGKKKSKGDSQTVDGWELTVGIEIHAQLNTARKLFSPAVTSFNDEPNSHVALFDLSMPGSQPLFQKETLIPALRAALALNCDIQKLSRFDRKHYFWWDQPSGYQITQYYEPFARNGHITLLARDGISPQDGESVTIGIKQVQLEQDTAKTLAQADKVNWLDFNRVGVPLIEIITEPEMHHPRTAAVLVRKIQMLLNTVDACVSGMETGGLRADVNVSVRRTDGSNPSLGTRTEIKNLSTIKAVEDAIIAERDRQISELEAGRAIPSETRGWTLGSNETRRLRGKEGEVDYRYMPDPDIAPLVIGDDLVDHLRRSLAVSPDSELDTLIARYGLTAKDALSLINLENGSRVQYFYKVLKSVEEKLAAELTEEEMPEFKSYSTLVGNWIIHELGRLTTFKAGPLAARDLSFTPEGDCLQVPDADLAQLLYHLVRKQITGKVAKELLFAIYLNEIEGGITQAIEDNDLWFKEIPEEEYEKLADEVMEGEDKVLQEFVDYKQFPQGKLMYLVGKMMRLGPTERIVPANAERVMRAKVEKLRSE</sequence>
<organism>
    <name type="scientific">Fusarium vanettenii (strain ATCC MYA-4622 / CBS 123669 / FGSC 9596 / NRRL 45880 / 77-13-4)</name>
    <name type="common">Fusarium solani subsp. pisi</name>
    <dbReference type="NCBI Taxonomy" id="660122"/>
    <lineage>
        <taxon>Eukaryota</taxon>
        <taxon>Fungi</taxon>
        <taxon>Dikarya</taxon>
        <taxon>Ascomycota</taxon>
        <taxon>Pezizomycotina</taxon>
        <taxon>Sordariomycetes</taxon>
        <taxon>Hypocreomycetidae</taxon>
        <taxon>Hypocreales</taxon>
        <taxon>Nectriaceae</taxon>
        <taxon>Fusarium</taxon>
        <taxon>Fusarium solani species complex</taxon>
        <taxon>Fusarium vanettenii</taxon>
    </lineage>
</organism>
<evidence type="ECO:0000255" key="1">
    <source>
        <dbReference type="HAMAP-Rule" id="MF_03147"/>
    </source>
</evidence>
<evidence type="ECO:0000256" key="2">
    <source>
        <dbReference type="SAM" id="MobiDB-lite"/>
    </source>
</evidence>
<reference key="1">
    <citation type="journal article" date="2009" name="PLoS Genet.">
        <title>The genome of Nectria haematococca: contribution of supernumerary chromosomes to gene expansion.</title>
        <authorList>
            <person name="Coleman J.J."/>
            <person name="Rounsley S.D."/>
            <person name="Rodriguez-Carres M."/>
            <person name="Kuo A."/>
            <person name="Wasmann C.C."/>
            <person name="Grimwood J."/>
            <person name="Schmutz J."/>
            <person name="Taga M."/>
            <person name="White G.J."/>
            <person name="Zhou S."/>
            <person name="Schwartz D.C."/>
            <person name="Freitag M."/>
            <person name="Ma L.-J."/>
            <person name="Danchin E.G.J."/>
            <person name="Henrissat B."/>
            <person name="Coutinho P.M."/>
            <person name="Nelson D.R."/>
            <person name="Straney D."/>
            <person name="Napoli C.A."/>
            <person name="Barker B.M."/>
            <person name="Gribskov M."/>
            <person name="Rep M."/>
            <person name="Kroken S."/>
            <person name="Molnar I."/>
            <person name="Rensing C."/>
            <person name="Kennell J.C."/>
            <person name="Zamora J."/>
            <person name="Farman M.L."/>
            <person name="Selker E.U."/>
            <person name="Salamov A."/>
            <person name="Shapiro H."/>
            <person name="Pangilinan J."/>
            <person name="Lindquist E."/>
            <person name="Lamers C."/>
            <person name="Grigoriev I.V."/>
            <person name="Geiser D.M."/>
            <person name="Covert S.F."/>
            <person name="Temporini E."/>
            <person name="VanEtten H.D."/>
        </authorList>
    </citation>
    <scope>NUCLEOTIDE SEQUENCE [LARGE SCALE GENOMIC DNA]</scope>
    <source>
        <strain>ATCC MYA-4622 / CBS 123669 / FGSC 9596 / NRRL 45880 / 77-13-4</strain>
    </source>
</reference>
<feature type="transit peptide" description="Mitochondrion" evidence="1">
    <location>
        <begin position="1"/>
        <end position="56"/>
    </location>
</feature>
<feature type="chain" id="PRO_0000413263" description="Glutamyl-tRNA(Gln) amidotransferase subunit B, mitochondrial">
    <location>
        <begin position="57"/>
        <end position="617"/>
    </location>
</feature>
<feature type="region of interest" description="Disordered" evidence="2">
    <location>
        <begin position="53"/>
        <end position="90"/>
    </location>
</feature>
<feature type="compositionally biased region" description="Basic residues" evidence="2">
    <location>
        <begin position="76"/>
        <end position="85"/>
    </location>
</feature>
<comment type="function">
    <text evidence="1">Allows the formation of correctly charged Gln-tRNA(Gln) through the transamidation of misacylated Glu-tRNA(Gln) in the mitochondria. The reaction takes place in the presence of glutamine and ATP through an activated gamma-phospho-Glu-tRNA(Gln).</text>
</comment>
<comment type="catalytic activity">
    <reaction evidence="1">
        <text>L-glutamyl-tRNA(Gln) + L-glutamine + ATP + H2O = L-glutaminyl-tRNA(Gln) + L-glutamate + ADP + phosphate + H(+)</text>
        <dbReference type="Rhea" id="RHEA:17521"/>
        <dbReference type="Rhea" id="RHEA-COMP:9681"/>
        <dbReference type="Rhea" id="RHEA-COMP:9684"/>
        <dbReference type="ChEBI" id="CHEBI:15377"/>
        <dbReference type="ChEBI" id="CHEBI:15378"/>
        <dbReference type="ChEBI" id="CHEBI:29985"/>
        <dbReference type="ChEBI" id="CHEBI:30616"/>
        <dbReference type="ChEBI" id="CHEBI:43474"/>
        <dbReference type="ChEBI" id="CHEBI:58359"/>
        <dbReference type="ChEBI" id="CHEBI:78520"/>
        <dbReference type="ChEBI" id="CHEBI:78521"/>
        <dbReference type="ChEBI" id="CHEBI:456216"/>
    </reaction>
</comment>
<comment type="subunit">
    <text evidence="1">Subunit of the heterotrimeric GatCAB amidotransferase (AdT) complex, composed of A, B and C subunits.</text>
</comment>
<comment type="subcellular location">
    <subcellularLocation>
        <location evidence="1">Mitochondrion</location>
    </subcellularLocation>
</comment>
<comment type="similarity">
    <text evidence="1">Belongs to the GatB/GatE family. GatB subfamily.</text>
</comment>
<proteinExistence type="inferred from homology"/>
<accession>C7YPY3</accession>
<dbReference type="EC" id="6.3.5.-" evidence="1"/>
<dbReference type="EMBL" id="GG698898">
    <property type="protein sequence ID" value="EEU45929.1"/>
    <property type="molecule type" value="Genomic_DNA"/>
</dbReference>
<dbReference type="RefSeq" id="XP_003051642.1">
    <property type="nucleotide sequence ID" value="XM_003051596.1"/>
</dbReference>
<dbReference type="SMR" id="C7YPY3"/>
<dbReference type="FunCoup" id="C7YPY3">
    <property type="interactions" value="374"/>
</dbReference>
<dbReference type="STRING" id="660122.C7YPY3"/>
<dbReference type="EnsemblFungi" id="NechaT39102">
    <property type="protein sequence ID" value="NechaP39102"/>
    <property type="gene ID" value="NechaG39102"/>
</dbReference>
<dbReference type="GeneID" id="9673390"/>
<dbReference type="KEGG" id="nhe:NECHADRAFT_39102"/>
<dbReference type="VEuPathDB" id="FungiDB:NECHADRAFT_39102"/>
<dbReference type="eggNOG" id="KOG2438">
    <property type="taxonomic scope" value="Eukaryota"/>
</dbReference>
<dbReference type="HOGENOM" id="CLU_019240_4_1_1"/>
<dbReference type="InParanoid" id="C7YPY3"/>
<dbReference type="OMA" id="ARKWWMG"/>
<dbReference type="OrthoDB" id="1722066at2759"/>
<dbReference type="Proteomes" id="UP000005206">
    <property type="component" value="Unassembled WGS sequence"/>
</dbReference>
<dbReference type="GO" id="GO:0030956">
    <property type="term" value="C:glutamyl-tRNA(Gln) amidotransferase complex"/>
    <property type="evidence" value="ECO:0007669"/>
    <property type="project" value="UniProtKB-UniRule"/>
</dbReference>
<dbReference type="GO" id="GO:0005739">
    <property type="term" value="C:mitochondrion"/>
    <property type="evidence" value="ECO:0007669"/>
    <property type="project" value="UniProtKB-SubCell"/>
</dbReference>
<dbReference type="GO" id="GO:0005524">
    <property type="term" value="F:ATP binding"/>
    <property type="evidence" value="ECO:0007669"/>
    <property type="project" value="UniProtKB-KW"/>
</dbReference>
<dbReference type="GO" id="GO:0050567">
    <property type="term" value="F:glutaminyl-tRNA synthase (glutamine-hydrolyzing) activity"/>
    <property type="evidence" value="ECO:0007669"/>
    <property type="project" value="UniProtKB-UniRule"/>
</dbReference>
<dbReference type="GO" id="GO:0070681">
    <property type="term" value="P:glutaminyl-tRNAGln biosynthesis via transamidation"/>
    <property type="evidence" value="ECO:0007669"/>
    <property type="project" value="UniProtKB-UniRule"/>
</dbReference>
<dbReference type="GO" id="GO:0032543">
    <property type="term" value="P:mitochondrial translation"/>
    <property type="evidence" value="ECO:0007669"/>
    <property type="project" value="UniProtKB-UniRule"/>
</dbReference>
<dbReference type="HAMAP" id="MF_00121">
    <property type="entry name" value="GatB"/>
    <property type="match status" value="1"/>
</dbReference>
<dbReference type="InterPro" id="IPR017959">
    <property type="entry name" value="Asn/Gln-tRNA_amidoTrfase_suB/E"/>
</dbReference>
<dbReference type="InterPro" id="IPR006075">
    <property type="entry name" value="Asn/Gln-tRNA_Trfase_suB/E_cat"/>
</dbReference>
<dbReference type="InterPro" id="IPR018027">
    <property type="entry name" value="Asn/Gln_amidotransferase"/>
</dbReference>
<dbReference type="InterPro" id="IPR004413">
    <property type="entry name" value="GatB"/>
</dbReference>
<dbReference type="InterPro" id="IPR017958">
    <property type="entry name" value="Gln-tRNA_amidoTrfase_suB_CS"/>
</dbReference>
<dbReference type="InterPro" id="IPR014746">
    <property type="entry name" value="Gln_synth/guanido_kin_cat_dom"/>
</dbReference>
<dbReference type="NCBIfam" id="TIGR00133">
    <property type="entry name" value="gatB"/>
    <property type="match status" value="1"/>
</dbReference>
<dbReference type="NCBIfam" id="NF004012">
    <property type="entry name" value="PRK05477.1-2"/>
    <property type="match status" value="1"/>
</dbReference>
<dbReference type="PANTHER" id="PTHR11659">
    <property type="entry name" value="GLUTAMYL-TRNA GLN AMIDOTRANSFERASE SUBUNIT B MITOCHONDRIAL AND PROKARYOTIC PET112-RELATED"/>
    <property type="match status" value="1"/>
</dbReference>
<dbReference type="PANTHER" id="PTHR11659:SF0">
    <property type="entry name" value="GLUTAMYL-TRNA(GLN) AMIDOTRANSFERASE SUBUNIT B, MITOCHONDRIAL"/>
    <property type="match status" value="1"/>
</dbReference>
<dbReference type="Pfam" id="PF02934">
    <property type="entry name" value="GatB_N"/>
    <property type="match status" value="1"/>
</dbReference>
<dbReference type="Pfam" id="PF02637">
    <property type="entry name" value="GatB_Yqey"/>
    <property type="match status" value="1"/>
</dbReference>
<dbReference type="SMART" id="SM00845">
    <property type="entry name" value="GatB_Yqey"/>
    <property type="match status" value="1"/>
</dbReference>
<dbReference type="SUPFAM" id="SSF55931">
    <property type="entry name" value="Glutamine synthetase/guanido kinase"/>
    <property type="match status" value="1"/>
</dbReference>
<dbReference type="PROSITE" id="PS01234">
    <property type="entry name" value="GATB"/>
    <property type="match status" value="1"/>
</dbReference>